<reference key="1">
    <citation type="journal article" date="2010" name="Appl. Environ. Microbiol.">
        <title>The genome sequence of Psychrobacter arcticus 273-4, a psychroactive Siberian permafrost bacterium, reveals mechanisms for adaptation to low-temperature growth.</title>
        <authorList>
            <person name="Ayala-del-Rio H.L."/>
            <person name="Chain P.S."/>
            <person name="Grzymski J.J."/>
            <person name="Ponder M.A."/>
            <person name="Ivanova N."/>
            <person name="Bergholz P.W."/>
            <person name="Di Bartolo G."/>
            <person name="Hauser L."/>
            <person name="Land M."/>
            <person name="Bakermans C."/>
            <person name="Rodrigues D."/>
            <person name="Klappenbach J."/>
            <person name="Zarka D."/>
            <person name="Larimer F."/>
            <person name="Richardson P."/>
            <person name="Murray A."/>
            <person name="Thomashow M."/>
            <person name="Tiedje J.M."/>
        </authorList>
    </citation>
    <scope>NUCLEOTIDE SEQUENCE [LARGE SCALE GENOMIC DNA]</scope>
    <source>
        <strain>DSM 17307 / VKM B-2377 / 273-4</strain>
    </source>
</reference>
<organism>
    <name type="scientific">Psychrobacter arcticus (strain DSM 17307 / VKM B-2377 / 273-4)</name>
    <dbReference type="NCBI Taxonomy" id="259536"/>
    <lineage>
        <taxon>Bacteria</taxon>
        <taxon>Pseudomonadati</taxon>
        <taxon>Pseudomonadota</taxon>
        <taxon>Gammaproteobacteria</taxon>
        <taxon>Moraxellales</taxon>
        <taxon>Moraxellaceae</taxon>
        <taxon>Psychrobacter</taxon>
    </lineage>
</organism>
<evidence type="ECO:0000255" key="1">
    <source>
        <dbReference type="HAMAP-Rule" id="MF_01658"/>
    </source>
</evidence>
<comment type="function">
    <text evidence="1">Catalyzes the hydroxylation of 2-nonaprenyl-3-methyl-6-methoxy-1,4-benzoquinol during ubiquinone biosynthesis.</text>
</comment>
<comment type="catalytic activity">
    <reaction evidence="1">
        <text>a 5-methoxy-2-methyl-3-(all-trans-polyprenyl)benzene-1,4-diol + AH2 + O2 = a 3-demethylubiquinol + A + H2O</text>
        <dbReference type="Rhea" id="RHEA:50908"/>
        <dbReference type="Rhea" id="RHEA-COMP:10859"/>
        <dbReference type="Rhea" id="RHEA-COMP:10914"/>
        <dbReference type="ChEBI" id="CHEBI:13193"/>
        <dbReference type="ChEBI" id="CHEBI:15377"/>
        <dbReference type="ChEBI" id="CHEBI:15379"/>
        <dbReference type="ChEBI" id="CHEBI:17499"/>
        <dbReference type="ChEBI" id="CHEBI:84167"/>
        <dbReference type="ChEBI" id="CHEBI:84422"/>
        <dbReference type="EC" id="1.14.99.60"/>
    </reaction>
</comment>
<comment type="cofactor">
    <cofactor evidence="1">
        <name>Fe cation</name>
        <dbReference type="ChEBI" id="CHEBI:24875"/>
    </cofactor>
    <text evidence="1">Binds 2 iron ions per subunit.</text>
</comment>
<comment type="pathway">
    <text evidence="1">Cofactor biosynthesis; ubiquinone biosynthesis.</text>
</comment>
<comment type="subcellular location">
    <subcellularLocation>
        <location evidence="1">Cell membrane</location>
        <topology evidence="1">Peripheral membrane protein</topology>
    </subcellularLocation>
</comment>
<comment type="similarity">
    <text evidence="1">Belongs to the COQ7 family.</text>
</comment>
<name>COQ7_PSYA2</name>
<accession>Q4FRJ8</accession>
<feature type="chain" id="PRO_0000338722" description="3-demethoxyubiquinol 3-hydroxylase">
    <location>
        <begin position="1"/>
        <end position="214"/>
    </location>
</feature>
<feature type="binding site" evidence="1">
    <location>
        <position position="63"/>
    </location>
    <ligand>
        <name>Fe cation</name>
        <dbReference type="ChEBI" id="CHEBI:24875"/>
        <label>1</label>
    </ligand>
</feature>
<feature type="binding site" evidence="1">
    <location>
        <position position="93"/>
    </location>
    <ligand>
        <name>Fe cation</name>
        <dbReference type="ChEBI" id="CHEBI:24875"/>
        <label>1</label>
    </ligand>
</feature>
<feature type="binding site" evidence="1">
    <location>
        <position position="93"/>
    </location>
    <ligand>
        <name>Fe cation</name>
        <dbReference type="ChEBI" id="CHEBI:24875"/>
        <label>2</label>
    </ligand>
</feature>
<feature type="binding site" evidence="1">
    <location>
        <position position="96"/>
    </location>
    <ligand>
        <name>Fe cation</name>
        <dbReference type="ChEBI" id="CHEBI:24875"/>
        <label>1</label>
    </ligand>
</feature>
<feature type="binding site" evidence="1">
    <location>
        <position position="145"/>
    </location>
    <ligand>
        <name>Fe cation</name>
        <dbReference type="ChEBI" id="CHEBI:24875"/>
        <label>2</label>
    </ligand>
</feature>
<feature type="binding site" evidence="1">
    <location>
        <position position="177"/>
    </location>
    <ligand>
        <name>Fe cation</name>
        <dbReference type="ChEBI" id="CHEBI:24875"/>
        <label>1</label>
    </ligand>
</feature>
<feature type="binding site" evidence="1">
    <location>
        <position position="177"/>
    </location>
    <ligand>
        <name>Fe cation</name>
        <dbReference type="ChEBI" id="CHEBI:24875"/>
        <label>2</label>
    </ligand>
</feature>
<feature type="binding site" evidence="1">
    <location>
        <position position="180"/>
    </location>
    <ligand>
        <name>Fe cation</name>
        <dbReference type="ChEBI" id="CHEBI:24875"/>
        <label>2</label>
    </ligand>
</feature>
<keyword id="KW-1003">Cell membrane</keyword>
<keyword id="KW-0408">Iron</keyword>
<keyword id="KW-0472">Membrane</keyword>
<keyword id="KW-0479">Metal-binding</keyword>
<keyword id="KW-0503">Monooxygenase</keyword>
<keyword id="KW-0560">Oxidoreductase</keyword>
<keyword id="KW-1185">Reference proteome</keyword>
<keyword id="KW-0831">Ubiquinone biosynthesis</keyword>
<proteinExistence type="inferred from homology"/>
<gene>
    <name evidence="1" type="primary">coq7</name>
    <name type="ordered locus">Psyc_1512</name>
</gene>
<protein>
    <recommendedName>
        <fullName evidence="1">3-demethoxyubiquinol 3-hydroxylase</fullName>
        <shortName evidence="1">DMQ hydroxylase</shortName>
        <ecNumber evidence="1">1.14.99.60</ecNumber>
    </recommendedName>
    <alternativeName>
        <fullName evidence="1">2-nonaprenyl-3-methyl-6-methoxy-1,4-benzoquinol hydroxylase</fullName>
    </alternativeName>
</protein>
<dbReference type="EC" id="1.14.99.60" evidence="1"/>
<dbReference type="EMBL" id="CP000082">
    <property type="protein sequence ID" value="AAZ19360.1"/>
    <property type="molecule type" value="Genomic_DNA"/>
</dbReference>
<dbReference type="SMR" id="Q4FRJ8"/>
<dbReference type="STRING" id="259536.Psyc_1512"/>
<dbReference type="KEGG" id="par:Psyc_1512"/>
<dbReference type="eggNOG" id="COG2941">
    <property type="taxonomic scope" value="Bacteria"/>
</dbReference>
<dbReference type="HOGENOM" id="CLU_088601_0_0_6"/>
<dbReference type="OrthoDB" id="5192789at2"/>
<dbReference type="UniPathway" id="UPA00232"/>
<dbReference type="Proteomes" id="UP000000546">
    <property type="component" value="Chromosome"/>
</dbReference>
<dbReference type="GO" id="GO:0005886">
    <property type="term" value="C:plasma membrane"/>
    <property type="evidence" value="ECO:0007669"/>
    <property type="project" value="UniProtKB-SubCell"/>
</dbReference>
<dbReference type="GO" id="GO:0008682">
    <property type="term" value="F:3-demethoxyubiquinol 3-hydroxylase activity"/>
    <property type="evidence" value="ECO:0007669"/>
    <property type="project" value="UniProtKB-EC"/>
</dbReference>
<dbReference type="GO" id="GO:0046872">
    <property type="term" value="F:metal ion binding"/>
    <property type="evidence" value="ECO:0007669"/>
    <property type="project" value="UniProtKB-KW"/>
</dbReference>
<dbReference type="GO" id="GO:0006744">
    <property type="term" value="P:ubiquinone biosynthetic process"/>
    <property type="evidence" value="ECO:0007669"/>
    <property type="project" value="UniProtKB-UniRule"/>
</dbReference>
<dbReference type="CDD" id="cd01042">
    <property type="entry name" value="DMQH"/>
    <property type="match status" value="1"/>
</dbReference>
<dbReference type="Gene3D" id="1.20.1260.10">
    <property type="match status" value="1"/>
</dbReference>
<dbReference type="HAMAP" id="MF_01658">
    <property type="entry name" value="COQ7"/>
    <property type="match status" value="1"/>
</dbReference>
<dbReference type="InterPro" id="IPR047809">
    <property type="entry name" value="COQ7_proteobact"/>
</dbReference>
<dbReference type="InterPro" id="IPR012347">
    <property type="entry name" value="Ferritin-like"/>
</dbReference>
<dbReference type="InterPro" id="IPR009078">
    <property type="entry name" value="Ferritin-like_SF"/>
</dbReference>
<dbReference type="InterPro" id="IPR011566">
    <property type="entry name" value="Ubq_synth_Coq7"/>
</dbReference>
<dbReference type="NCBIfam" id="NF033656">
    <property type="entry name" value="DMQ_monoox_COQ7"/>
    <property type="match status" value="1"/>
</dbReference>
<dbReference type="PANTHER" id="PTHR11237:SF4">
    <property type="entry name" value="5-DEMETHOXYUBIQUINONE HYDROXYLASE, MITOCHONDRIAL"/>
    <property type="match status" value="1"/>
</dbReference>
<dbReference type="PANTHER" id="PTHR11237">
    <property type="entry name" value="COENZYME Q10 BIOSYNTHESIS PROTEIN 7"/>
    <property type="match status" value="1"/>
</dbReference>
<dbReference type="Pfam" id="PF03232">
    <property type="entry name" value="COQ7"/>
    <property type="match status" value="1"/>
</dbReference>
<dbReference type="SUPFAM" id="SSF47240">
    <property type="entry name" value="Ferritin-like"/>
    <property type="match status" value="1"/>
</dbReference>
<sequence length="214" mass="23559">MALRPLSKIDQLLLGVDKALRAVVPHSNPSTRPLPVSSDEIPELSITESRHVAGLMRINHTGEVCAQGLYHGQAFTAKDENVKQAMQQSAEEEVDHLVWCETRLSELGSHPSVFTPLWYGMSFGLGAVAGAISNDFSLGFVAETEAQVSEHLQDHIGQLPPQDQRSKEILAQMDSEELHHRELALANGGAALSPPIRHTMRWMANRMKATAYHL</sequence>